<protein>
    <recommendedName>
        <fullName evidence="1 3">Ubiquitin-conjugating enzyme E2 14</fullName>
        <ecNumber>2.3.2.23</ecNumber>
    </recommendedName>
    <alternativeName>
        <fullName>E2 ubiquitin-conjugating enzyme 14</fullName>
    </alternativeName>
    <alternativeName>
        <fullName evidence="1">Ubiquitin carrier protein 14</fullName>
    </alternativeName>
    <alternativeName>
        <fullName evidence="1">Ubiquitin-protein ligase 14</fullName>
    </alternativeName>
</protein>
<dbReference type="EC" id="2.3.2.23"/>
<dbReference type="EMBL" id="CU329670">
    <property type="protein sequence ID" value="CAB54826.1"/>
    <property type="molecule type" value="Genomic_DNA"/>
</dbReference>
<dbReference type="PIR" id="T37559">
    <property type="entry name" value="T37559"/>
</dbReference>
<dbReference type="RefSeq" id="NP_594859.1">
    <property type="nucleotide sequence ID" value="NM_001020288.2"/>
</dbReference>
<dbReference type="SMR" id="Q9UTN8"/>
<dbReference type="BioGRID" id="278063">
    <property type="interactions" value="15"/>
</dbReference>
<dbReference type="FunCoup" id="Q9UTN8">
    <property type="interactions" value="283"/>
</dbReference>
<dbReference type="STRING" id="284812.Q9UTN8"/>
<dbReference type="PaxDb" id="4896-SPAC1250.03.1"/>
<dbReference type="EnsemblFungi" id="SPAC1250.03.1">
    <property type="protein sequence ID" value="SPAC1250.03.1:pep"/>
    <property type="gene ID" value="SPAC1250.03"/>
</dbReference>
<dbReference type="GeneID" id="2541565"/>
<dbReference type="KEGG" id="spo:2541565"/>
<dbReference type="PomBase" id="SPAC1250.03">
    <property type="gene designation" value="ubc14"/>
</dbReference>
<dbReference type="VEuPathDB" id="FungiDB:SPAC1250.03"/>
<dbReference type="eggNOG" id="KOG0417">
    <property type="taxonomic scope" value="Eukaryota"/>
</dbReference>
<dbReference type="HOGENOM" id="CLU_030988_13_3_1"/>
<dbReference type="InParanoid" id="Q9UTN8"/>
<dbReference type="OMA" id="ADLHTWH"/>
<dbReference type="PhylomeDB" id="Q9UTN8"/>
<dbReference type="Reactome" id="R-SPO-8866652">
    <property type="pathway name" value="Synthesis of active ubiquitin: roles of E1 and E2 enzymes"/>
</dbReference>
<dbReference type="Reactome" id="R-SPO-8866654">
    <property type="pathway name" value="E3 ubiquitin ligases ubiquitinate target proteins"/>
</dbReference>
<dbReference type="Reactome" id="R-SPO-9033241">
    <property type="pathway name" value="Peroxisomal protein import"/>
</dbReference>
<dbReference type="Reactome" id="R-SPO-983168">
    <property type="pathway name" value="Antigen processing: Ubiquitination &amp; Proteasome degradation"/>
</dbReference>
<dbReference type="UniPathway" id="UPA00143"/>
<dbReference type="PRO" id="PR:Q9UTN8"/>
<dbReference type="Proteomes" id="UP000002485">
    <property type="component" value="Chromosome I"/>
</dbReference>
<dbReference type="GO" id="GO:0005634">
    <property type="term" value="C:nucleus"/>
    <property type="evidence" value="ECO:0000318"/>
    <property type="project" value="GO_Central"/>
</dbReference>
<dbReference type="GO" id="GO:0005524">
    <property type="term" value="F:ATP binding"/>
    <property type="evidence" value="ECO:0007669"/>
    <property type="project" value="UniProtKB-KW"/>
</dbReference>
<dbReference type="GO" id="GO:0061631">
    <property type="term" value="F:ubiquitin conjugating enzyme activity"/>
    <property type="evidence" value="ECO:0000318"/>
    <property type="project" value="GO_Central"/>
</dbReference>
<dbReference type="GO" id="GO:0000209">
    <property type="term" value="P:protein polyubiquitination"/>
    <property type="evidence" value="ECO:0000318"/>
    <property type="project" value="GO_Central"/>
</dbReference>
<dbReference type="GO" id="GO:0006511">
    <property type="term" value="P:ubiquitin-dependent protein catabolic process"/>
    <property type="evidence" value="ECO:0000250"/>
    <property type="project" value="PomBase"/>
</dbReference>
<dbReference type="CDD" id="cd23815">
    <property type="entry name" value="UBCc_SpUBC14-like"/>
    <property type="match status" value="1"/>
</dbReference>
<dbReference type="FunFam" id="3.10.110.10:FF:000060">
    <property type="entry name" value="Ubiquitin conjugating enzyme (UbcB)"/>
    <property type="match status" value="1"/>
</dbReference>
<dbReference type="Gene3D" id="3.10.110.10">
    <property type="entry name" value="Ubiquitin Conjugating Enzyme"/>
    <property type="match status" value="1"/>
</dbReference>
<dbReference type="InterPro" id="IPR050113">
    <property type="entry name" value="Ub_conjugating_enzyme"/>
</dbReference>
<dbReference type="InterPro" id="IPR000608">
    <property type="entry name" value="UBQ-conjugat_E2_core"/>
</dbReference>
<dbReference type="InterPro" id="IPR016135">
    <property type="entry name" value="UBQ-conjugating_enzyme/RWD"/>
</dbReference>
<dbReference type="PANTHER" id="PTHR24067">
    <property type="entry name" value="UBIQUITIN-CONJUGATING ENZYME E2"/>
    <property type="match status" value="1"/>
</dbReference>
<dbReference type="Pfam" id="PF00179">
    <property type="entry name" value="UQ_con"/>
    <property type="match status" value="1"/>
</dbReference>
<dbReference type="SMART" id="SM00212">
    <property type="entry name" value="UBCc"/>
    <property type="match status" value="1"/>
</dbReference>
<dbReference type="SUPFAM" id="SSF54495">
    <property type="entry name" value="UBC-like"/>
    <property type="match status" value="1"/>
</dbReference>
<dbReference type="PROSITE" id="PS50127">
    <property type="entry name" value="UBC_2"/>
    <property type="match status" value="1"/>
</dbReference>
<accession>Q9UTN8</accession>
<evidence type="ECO:0000250" key="1">
    <source>
        <dbReference type="UniProtKB" id="P15731"/>
    </source>
</evidence>
<evidence type="ECO:0000255" key="2">
    <source>
        <dbReference type="PROSITE-ProRule" id="PRU00388"/>
    </source>
</evidence>
<evidence type="ECO:0000312" key="3">
    <source>
        <dbReference type="EMBL" id="CAB54826.1"/>
    </source>
</evidence>
<organism>
    <name type="scientific">Schizosaccharomyces pombe (strain 972 / ATCC 24843)</name>
    <name type="common">Fission yeast</name>
    <dbReference type="NCBI Taxonomy" id="284812"/>
    <lineage>
        <taxon>Eukaryota</taxon>
        <taxon>Fungi</taxon>
        <taxon>Dikarya</taxon>
        <taxon>Ascomycota</taxon>
        <taxon>Taphrinomycotina</taxon>
        <taxon>Schizosaccharomycetes</taxon>
        <taxon>Schizosaccharomycetales</taxon>
        <taxon>Schizosaccharomycetaceae</taxon>
        <taxon>Schizosaccharomyces</taxon>
    </lineage>
</organism>
<feature type="chain" id="PRO_0000361053" description="Ubiquitin-conjugating enzyme E2 14">
    <location>
        <begin position="1"/>
        <end position="155"/>
    </location>
</feature>
<feature type="domain" description="UBC core" evidence="2">
    <location>
        <begin position="7"/>
        <end position="154"/>
    </location>
</feature>
<feature type="active site" description="Glycyl thioester intermediate" evidence="1 2">
    <location>
        <position position="91"/>
    </location>
</feature>
<comment type="function">
    <text evidence="1 2">Catalyzes the covalent attachment of ubiquitin to other proteins. Mediates the selective degradation of short-lived and abnormal proteins.</text>
</comment>
<comment type="catalytic activity">
    <reaction evidence="1 2">
        <text>S-ubiquitinyl-[E1 ubiquitin-activating enzyme]-L-cysteine + [E2 ubiquitin-conjugating enzyme]-L-cysteine = [E1 ubiquitin-activating enzyme]-L-cysteine + S-ubiquitinyl-[E2 ubiquitin-conjugating enzyme]-L-cysteine.</text>
        <dbReference type="EC" id="2.3.2.23"/>
    </reaction>
</comment>
<comment type="pathway">
    <text evidence="1 2">Protein modification; protein ubiquitination.</text>
</comment>
<comment type="similarity">
    <text evidence="2">Belongs to the ubiquitin-conjugating enzyme family.</text>
</comment>
<name>UBC14_SCHPO</name>
<reference key="1">
    <citation type="journal article" date="2002" name="Nature">
        <title>The genome sequence of Schizosaccharomyces pombe.</title>
        <authorList>
            <person name="Wood V."/>
            <person name="Gwilliam R."/>
            <person name="Rajandream M.A."/>
            <person name="Lyne M.H."/>
            <person name="Lyne R."/>
            <person name="Stewart A."/>
            <person name="Sgouros J.G."/>
            <person name="Peat N."/>
            <person name="Hayles J."/>
            <person name="Baker S.G."/>
            <person name="Basham D."/>
            <person name="Bowman S."/>
            <person name="Brooks K."/>
            <person name="Brown D."/>
            <person name="Brown S."/>
            <person name="Chillingworth T."/>
            <person name="Churcher C.M."/>
            <person name="Collins M."/>
            <person name="Connor R."/>
            <person name="Cronin A."/>
            <person name="Davis P."/>
            <person name="Feltwell T."/>
            <person name="Fraser A."/>
            <person name="Gentles S."/>
            <person name="Goble A."/>
            <person name="Hamlin N."/>
            <person name="Harris D.E."/>
            <person name="Hidalgo J."/>
            <person name="Hodgson G."/>
            <person name="Holroyd S."/>
            <person name="Hornsby T."/>
            <person name="Howarth S."/>
            <person name="Huckle E.J."/>
            <person name="Hunt S."/>
            <person name="Jagels K."/>
            <person name="James K.D."/>
            <person name="Jones L."/>
            <person name="Jones M."/>
            <person name="Leather S."/>
            <person name="McDonald S."/>
            <person name="McLean J."/>
            <person name="Mooney P."/>
            <person name="Moule S."/>
            <person name="Mungall K.L."/>
            <person name="Murphy L.D."/>
            <person name="Niblett D."/>
            <person name="Odell C."/>
            <person name="Oliver K."/>
            <person name="O'Neil S."/>
            <person name="Pearson D."/>
            <person name="Quail M.A."/>
            <person name="Rabbinowitsch E."/>
            <person name="Rutherford K.M."/>
            <person name="Rutter S."/>
            <person name="Saunders D."/>
            <person name="Seeger K."/>
            <person name="Sharp S."/>
            <person name="Skelton J."/>
            <person name="Simmonds M.N."/>
            <person name="Squares R."/>
            <person name="Squares S."/>
            <person name="Stevens K."/>
            <person name="Taylor K."/>
            <person name="Taylor R.G."/>
            <person name="Tivey A."/>
            <person name="Walsh S.V."/>
            <person name="Warren T."/>
            <person name="Whitehead S."/>
            <person name="Woodward J.R."/>
            <person name="Volckaert G."/>
            <person name="Aert R."/>
            <person name="Robben J."/>
            <person name="Grymonprez B."/>
            <person name="Weltjens I."/>
            <person name="Vanstreels E."/>
            <person name="Rieger M."/>
            <person name="Schaefer M."/>
            <person name="Mueller-Auer S."/>
            <person name="Gabel C."/>
            <person name="Fuchs M."/>
            <person name="Duesterhoeft A."/>
            <person name="Fritzc C."/>
            <person name="Holzer E."/>
            <person name="Moestl D."/>
            <person name="Hilbert H."/>
            <person name="Borzym K."/>
            <person name="Langer I."/>
            <person name="Beck A."/>
            <person name="Lehrach H."/>
            <person name="Reinhardt R."/>
            <person name="Pohl T.M."/>
            <person name="Eger P."/>
            <person name="Zimmermann W."/>
            <person name="Wedler H."/>
            <person name="Wambutt R."/>
            <person name="Purnelle B."/>
            <person name="Goffeau A."/>
            <person name="Cadieu E."/>
            <person name="Dreano S."/>
            <person name="Gloux S."/>
            <person name="Lelaure V."/>
            <person name="Mottier S."/>
            <person name="Galibert F."/>
            <person name="Aves S.J."/>
            <person name="Xiang Z."/>
            <person name="Hunt C."/>
            <person name="Moore K."/>
            <person name="Hurst S.M."/>
            <person name="Lucas M."/>
            <person name="Rochet M."/>
            <person name="Gaillardin C."/>
            <person name="Tallada V.A."/>
            <person name="Garzon A."/>
            <person name="Thode G."/>
            <person name="Daga R.R."/>
            <person name="Cruzado L."/>
            <person name="Jimenez J."/>
            <person name="Sanchez M."/>
            <person name="del Rey F."/>
            <person name="Benito J."/>
            <person name="Dominguez A."/>
            <person name="Revuelta J.L."/>
            <person name="Moreno S."/>
            <person name="Armstrong J."/>
            <person name="Forsburg S.L."/>
            <person name="Cerutti L."/>
            <person name="Lowe T."/>
            <person name="McCombie W.R."/>
            <person name="Paulsen I."/>
            <person name="Potashkin J."/>
            <person name="Shpakovski G.V."/>
            <person name="Ussery D."/>
            <person name="Barrell B.G."/>
            <person name="Nurse P."/>
        </authorList>
    </citation>
    <scope>NUCLEOTIDE SEQUENCE [LARGE SCALE GENOMIC DNA]</scope>
    <source>
        <strain>972 / ATCC 24843</strain>
    </source>
</reference>
<gene>
    <name type="primary">ubc14</name>
    <name type="ORF">SPAC1250.03</name>
</gene>
<sequence>MASASPSSSRRLTKEYSDLREHPIPDIRVNLVDDNLFHWACTALGPSDSVYAGGKFHFSLKFPLDYPFQPPTIEFTTRIYHPNFDSEGNVCLAILKQQVFKPSIKLRSVLEQILQLLREPNPDDPLVASIAEQYRNDRPSFDKIARDYVEQFAKS</sequence>
<keyword id="KW-0067">ATP-binding</keyword>
<keyword id="KW-0547">Nucleotide-binding</keyword>
<keyword id="KW-1185">Reference proteome</keyword>
<keyword id="KW-0808">Transferase</keyword>
<keyword id="KW-0833">Ubl conjugation pathway</keyword>
<proteinExistence type="inferred from homology"/>